<comment type="function">
    <text evidence="1">The RuvA-RuvB-RuvC complex processes Holliday junction (HJ) DNA during genetic recombination and DNA repair, while the RuvA-RuvB complex plays an important role in the rescue of blocked DNA replication forks via replication fork reversal (RFR). RuvA specifically binds to HJ cruciform DNA, conferring on it an open structure. The RuvB hexamer acts as an ATP-dependent pump, pulling dsDNA into and through the RuvAB complex. RuvB forms 2 homohexamers on either side of HJ DNA bound by 1 or 2 RuvA tetramers; 4 subunits per hexamer contact DNA at a time. Coordinated motions by a converter formed by DNA-disengaged RuvB subunits stimulates ATP hydrolysis and nucleotide exchange. Immobilization of the converter enables RuvB to convert the ATP-contained energy into a lever motion, pulling 2 nucleotides of DNA out of the RuvA tetramer per ATP hydrolyzed, thus driving DNA branch migration. The RuvB motors rotate together with the DNA substrate, which together with the progressing nucleotide cycle form the mechanistic basis for DNA recombination by continuous HJ branch migration. Branch migration allows RuvC to scan DNA until it finds its consensus sequence, where it cleaves and resolves cruciform DNA.</text>
</comment>
<comment type="catalytic activity">
    <reaction evidence="1">
        <text>ATP + H2O = ADP + phosphate + H(+)</text>
        <dbReference type="Rhea" id="RHEA:13065"/>
        <dbReference type="ChEBI" id="CHEBI:15377"/>
        <dbReference type="ChEBI" id="CHEBI:15378"/>
        <dbReference type="ChEBI" id="CHEBI:30616"/>
        <dbReference type="ChEBI" id="CHEBI:43474"/>
        <dbReference type="ChEBI" id="CHEBI:456216"/>
    </reaction>
</comment>
<comment type="subunit">
    <text evidence="1">Homohexamer. Forms an RuvA(8)-RuvB(12)-Holliday junction (HJ) complex. HJ DNA is sandwiched between 2 RuvA tetramers; dsDNA enters through RuvA and exits via RuvB. An RuvB hexamer assembles on each DNA strand where it exits the tetramer. Each RuvB hexamer is contacted by two RuvA subunits (via domain III) on 2 adjacent RuvB subunits; this complex drives branch migration. In the full resolvosome a probable DNA-RuvA(4)-RuvB(12)-RuvC(2) complex forms which resolves the HJ.</text>
</comment>
<comment type="subcellular location">
    <subcellularLocation>
        <location evidence="1">Cytoplasm</location>
    </subcellularLocation>
</comment>
<comment type="domain">
    <text evidence="1">Has 3 domains, the large (RuvB-L) and small ATPase (RuvB-S) domains and the C-terminal head (RuvB-H) domain. The head domain binds DNA, while the ATPase domains jointly bind ATP, ADP or are empty depending on the state of the subunit in the translocation cycle. During a single DNA translocation step the structure of each domain remains the same, but their relative positions change.</text>
</comment>
<comment type="similarity">
    <text evidence="1">Belongs to the RuvB family.</text>
</comment>
<dbReference type="EC" id="3.6.4.-" evidence="1"/>
<dbReference type="EMBL" id="AE017355">
    <property type="protein sequence ID" value="AAT63708.1"/>
    <property type="molecule type" value="Genomic_DNA"/>
</dbReference>
<dbReference type="RefSeq" id="YP_038470.1">
    <property type="nucleotide sequence ID" value="NC_005957.1"/>
</dbReference>
<dbReference type="SMR" id="Q6HDA6"/>
<dbReference type="KEGG" id="btk:BT9727_4153"/>
<dbReference type="PATRIC" id="fig|281309.8.peg.4431"/>
<dbReference type="HOGENOM" id="CLU_055599_1_0_9"/>
<dbReference type="Proteomes" id="UP000001301">
    <property type="component" value="Chromosome"/>
</dbReference>
<dbReference type="GO" id="GO:0005737">
    <property type="term" value="C:cytoplasm"/>
    <property type="evidence" value="ECO:0007669"/>
    <property type="project" value="UniProtKB-SubCell"/>
</dbReference>
<dbReference type="GO" id="GO:0048476">
    <property type="term" value="C:Holliday junction resolvase complex"/>
    <property type="evidence" value="ECO:0007669"/>
    <property type="project" value="UniProtKB-UniRule"/>
</dbReference>
<dbReference type="GO" id="GO:0005524">
    <property type="term" value="F:ATP binding"/>
    <property type="evidence" value="ECO:0007669"/>
    <property type="project" value="UniProtKB-UniRule"/>
</dbReference>
<dbReference type="GO" id="GO:0016887">
    <property type="term" value="F:ATP hydrolysis activity"/>
    <property type="evidence" value="ECO:0007669"/>
    <property type="project" value="InterPro"/>
</dbReference>
<dbReference type="GO" id="GO:0000400">
    <property type="term" value="F:four-way junction DNA binding"/>
    <property type="evidence" value="ECO:0007669"/>
    <property type="project" value="UniProtKB-UniRule"/>
</dbReference>
<dbReference type="GO" id="GO:0009378">
    <property type="term" value="F:four-way junction helicase activity"/>
    <property type="evidence" value="ECO:0007669"/>
    <property type="project" value="InterPro"/>
</dbReference>
<dbReference type="GO" id="GO:0006310">
    <property type="term" value="P:DNA recombination"/>
    <property type="evidence" value="ECO:0007669"/>
    <property type="project" value="UniProtKB-UniRule"/>
</dbReference>
<dbReference type="GO" id="GO:0006281">
    <property type="term" value="P:DNA repair"/>
    <property type="evidence" value="ECO:0007669"/>
    <property type="project" value="UniProtKB-UniRule"/>
</dbReference>
<dbReference type="CDD" id="cd00009">
    <property type="entry name" value="AAA"/>
    <property type="match status" value="1"/>
</dbReference>
<dbReference type="Gene3D" id="1.10.8.60">
    <property type="match status" value="1"/>
</dbReference>
<dbReference type="Gene3D" id="3.40.50.300">
    <property type="entry name" value="P-loop containing nucleotide triphosphate hydrolases"/>
    <property type="match status" value="1"/>
</dbReference>
<dbReference type="Gene3D" id="1.10.10.10">
    <property type="entry name" value="Winged helix-like DNA-binding domain superfamily/Winged helix DNA-binding domain"/>
    <property type="match status" value="1"/>
</dbReference>
<dbReference type="HAMAP" id="MF_00016">
    <property type="entry name" value="DNA_HJ_migration_RuvB"/>
    <property type="match status" value="1"/>
</dbReference>
<dbReference type="InterPro" id="IPR003593">
    <property type="entry name" value="AAA+_ATPase"/>
</dbReference>
<dbReference type="InterPro" id="IPR041445">
    <property type="entry name" value="AAA_lid_4"/>
</dbReference>
<dbReference type="InterPro" id="IPR004605">
    <property type="entry name" value="DNA_helicase_Holl-junc_RuvB"/>
</dbReference>
<dbReference type="InterPro" id="IPR027417">
    <property type="entry name" value="P-loop_NTPase"/>
</dbReference>
<dbReference type="InterPro" id="IPR008824">
    <property type="entry name" value="RuvB-like_N"/>
</dbReference>
<dbReference type="InterPro" id="IPR008823">
    <property type="entry name" value="RuvB_C"/>
</dbReference>
<dbReference type="InterPro" id="IPR036388">
    <property type="entry name" value="WH-like_DNA-bd_sf"/>
</dbReference>
<dbReference type="InterPro" id="IPR036390">
    <property type="entry name" value="WH_DNA-bd_sf"/>
</dbReference>
<dbReference type="NCBIfam" id="NF000868">
    <property type="entry name" value="PRK00080.1"/>
    <property type="match status" value="1"/>
</dbReference>
<dbReference type="NCBIfam" id="TIGR00635">
    <property type="entry name" value="ruvB"/>
    <property type="match status" value="1"/>
</dbReference>
<dbReference type="PANTHER" id="PTHR42848">
    <property type="match status" value="1"/>
</dbReference>
<dbReference type="PANTHER" id="PTHR42848:SF1">
    <property type="entry name" value="HOLLIDAY JUNCTION BRANCH MIGRATION COMPLEX SUBUNIT RUVB"/>
    <property type="match status" value="1"/>
</dbReference>
<dbReference type="Pfam" id="PF17864">
    <property type="entry name" value="AAA_lid_4"/>
    <property type="match status" value="1"/>
</dbReference>
<dbReference type="Pfam" id="PF05491">
    <property type="entry name" value="RuvB_C"/>
    <property type="match status" value="1"/>
</dbReference>
<dbReference type="Pfam" id="PF05496">
    <property type="entry name" value="RuvB_N"/>
    <property type="match status" value="1"/>
</dbReference>
<dbReference type="SMART" id="SM00382">
    <property type="entry name" value="AAA"/>
    <property type="match status" value="1"/>
</dbReference>
<dbReference type="SUPFAM" id="SSF52540">
    <property type="entry name" value="P-loop containing nucleoside triphosphate hydrolases"/>
    <property type="match status" value="1"/>
</dbReference>
<dbReference type="SUPFAM" id="SSF46785">
    <property type="entry name" value="Winged helix' DNA-binding domain"/>
    <property type="match status" value="1"/>
</dbReference>
<organism>
    <name type="scientific">Bacillus thuringiensis subsp. konkukian (strain 97-27)</name>
    <dbReference type="NCBI Taxonomy" id="281309"/>
    <lineage>
        <taxon>Bacteria</taxon>
        <taxon>Bacillati</taxon>
        <taxon>Bacillota</taxon>
        <taxon>Bacilli</taxon>
        <taxon>Bacillales</taxon>
        <taxon>Bacillaceae</taxon>
        <taxon>Bacillus</taxon>
        <taxon>Bacillus cereus group</taxon>
    </lineage>
</organism>
<protein>
    <recommendedName>
        <fullName evidence="1">Holliday junction branch migration complex subunit RuvB</fullName>
        <ecNumber evidence="1">3.6.4.-</ecNumber>
    </recommendedName>
</protein>
<gene>
    <name evidence="1" type="primary">ruvB</name>
    <name type="ordered locus">BT9727_4153</name>
</gene>
<keyword id="KW-0067">ATP-binding</keyword>
<keyword id="KW-0963">Cytoplasm</keyword>
<keyword id="KW-0227">DNA damage</keyword>
<keyword id="KW-0233">DNA recombination</keyword>
<keyword id="KW-0234">DNA repair</keyword>
<keyword id="KW-0238">DNA-binding</keyword>
<keyword id="KW-0378">Hydrolase</keyword>
<keyword id="KW-0547">Nucleotide-binding</keyword>
<sequence length="336" mass="37386">MSIMDERLLSGESAYEDADLEYSLRPQTLRQYIGQDKAKHNLEVFIEAAKMREETLDHVLLYGPPGLGKTTLANIIANEMGVNVRTTSGPAIERPGDLAAVLTSLQPGDVLFIDEIHRLHRSIEEVLYPAMEDFCLDIVIGKGPSARSVRLDLPPFTLVGATTRAGALSAPLRDRFGVLSRLEYYTVDQLSAIVERTAEVFEVEIDSLAALEIARRARGTPRIANRLLRRVRDFAQVRGNGTVTMEITQMALELLQVDKLGLDHIDHKLLLGIIEKFRGGPVGLETVSATIGEESHTIEDVYEPYLLQIGFLQRTPRGRIVTPLAYEHFGMEMPKV</sequence>
<accession>Q6HDA6</accession>
<proteinExistence type="inferred from homology"/>
<feature type="chain" id="PRO_0000165490" description="Holliday junction branch migration complex subunit RuvB">
    <location>
        <begin position="1"/>
        <end position="336"/>
    </location>
</feature>
<feature type="region of interest" description="Large ATPase domain (RuvB-L)" evidence="1">
    <location>
        <begin position="4"/>
        <end position="185"/>
    </location>
</feature>
<feature type="region of interest" description="Small ATPAse domain (RuvB-S)" evidence="1">
    <location>
        <begin position="186"/>
        <end position="256"/>
    </location>
</feature>
<feature type="region of interest" description="Head domain (RuvB-H)" evidence="1">
    <location>
        <begin position="259"/>
        <end position="336"/>
    </location>
</feature>
<feature type="binding site" evidence="1">
    <location>
        <position position="24"/>
    </location>
    <ligand>
        <name>ATP</name>
        <dbReference type="ChEBI" id="CHEBI:30616"/>
    </ligand>
</feature>
<feature type="binding site" evidence="1">
    <location>
        <position position="25"/>
    </location>
    <ligand>
        <name>ATP</name>
        <dbReference type="ChEBI" id="CHEBI:30616"/>
    </ligand>
</feature>
<feature type="binding site" evidence="1">
    <location>
        <position position="66"/>
    </location>
    <ligand>
        <name>ATP</name>
        <dbReference type="ChEBI" id="CHEBI:30616"/>
    </ligand>
</feature>
<feature type="binding site" evidence="1">
    <location>
        <position position="69"/>
    </location>
    <ligand>
        <name>ATP</name>
        <dbReference type="ChEBI" id="CHEBI:30616"/>
    </ligand>
</feature>
<feature type="binding site" evidence="1">
    <location>
        <position position="70"/>
    </location>
    <ligand>
        <name>ATP</name>
        <dbReference type="ChEBI" id="CHEBI:30616"/>
    </ligand>
</feature>
<feature type="binding site" evidence="1">
    <location>
        <position position="70"/>
    </location>
    <ligand>
        <name>Mg(2+)</name>
        <dbReference type="ChEBI" id="CHEBI:18420"/>
    </ligand>
</feature>
<feature type="binding site" evidence="1">
    <location>
        <position position="71"/>
    </location>
    <ligand>
        <name>ATP</name>
        <dbReference type="ChEBI" id="CHEBI:30616"/>
    </ligand>
</feature>
<feature type="binding site" evidence="1">
    <location>
        <begin position="132"/>
        <end position="134"/>
    </location>
    <ligand>
        <name>ATP</name>
        <dbReference type="ChEBI" id="CHEBI:30616"/>
    </ligand>
</feature>
<feature type="binding site" evidence="1">
    <location>
        <position position="175"/>
    </location>
    <ligand>
        <name>ATP</name>
        <dbReference type="ChEBI" id="CHEBI:30616"/>
    </ligand>
</feature>
<feature type="binding site" evidence="1">
    <location>
        <position position="185"/>
    </location>
    <ligand>
        <name>ATP</name>
        <dbReference type="ChEBI" id="CHEBI:30616"/>
    </ligand>
</feature>
<feature type="binding site" evidence="1">
    <location>
        <position position="222"/>
    </location>
    <ligand>
        <name>ATP</name>
        <dbReference type="ChEBI" id="CHEBI:30616"/>
    </ligand>
</feature>
<feature type="binding site" evidence="1">
    <location>
        <position position="314"/>
    </location>
    <ligand>
        <name>DNA</name>
        <dbReference type="ChEBI" id="CHEBI:16991"/>
    </ligand>
</feature>
<feature type="binding site" evidence="1">
    <location>
        <position position="319"/>
    </location>
    <ligand>
        <name>DNA</name>
        <dbReference type="ChEBI" id="CHEBI:16991"/>
    </ligand>
</feature>
<name>RUVB_BACHK</name>
<reference key="1">
    <citation type="journal article" date="2006" name="J. Bacteriol.">
        <title>Pathogenomic sequence analysis of Bacillus cereus and Bacillus thuringiensis isolates closely related to Bacillus anthracis.</title>
        <authorList>
            <person name="Han C.S."/>
            <person name="Xie G."/>
            <person name="Challacombe J.F."/>
            <person name="Altherr M.R."/>
            <person name="Bhotika S.S."/>
            <person name="Bruce D."/>
            <person name="Campbell C.S."/>
            <person name="Campbell M.L."/>
            <person name="Chen J."/>
            <person name="Chertkov O."/>
            <person name="Cleland C."/>
            <person name="Dimitrijevic M."/>
            <person name="Doggett N.A."/>
            <person name="Fawcett J.J."/>
            <person name="Glavina T."/>
            <person name="Goodwin L.A."/>
            <person name="Hill K.K."/>
            <person name="Hitchcock P."/>
            <person name="Jackson P.J."/>
            <person name="Keim P."/>
            <person name="Kewalramani A.R."/>
            <person name="Longmire J."/>
            <person name="Lucas S."/>
            <person name="Malfatti S."/>
            <person name="McMurry K."/>
            <person name="Meincke L.J."/>
            <person name="Misra M."/>
            <person name="Moseman B.L."/>
            <person name="Mundt M."/>
            <person name="Munk A.C."/>
            <person name="Okinaka R.T."/>
            <person name="Parson-Quintana B."/>
            <person name="Reilly L.P."/>
            <person name="Richardson P."/>
            <person name="Robinson D.L."/>
            <person name="Rubin E."/>
            <person name="Saunders E."/>
            <person name="Tapia R."/>
            <person name="Tesmer J.G."/>
            <person name="Thayer N."/>
            <person name="Thompson L.S."/>
            <person name="Tice H."/>
            <person name="Ticknor L.O."/>
            <person name="Wills P.L."/>
            <person name="Brettin T.S."/>
            <person name="Gilna P."/>
        </authorList>
    </citation>
    <scope>NUCLEOTIDE SEQUENCE [LARGE SCALE GENOMIC DNA]</scope>
    <source>
        <strain>97-27</strain>
    </source>
</reference>
<evidence type="ECO:0000255" key="1">
    <source>
        <dbReference type="HAMAP-Rule" id="MF_00016"/>
    </source>
</evidence>